<evidence type="ECO:0000255" key="1">
    <source>
        <dbReference type="HAMAP-Rule" id="MF_00245"/>
    </source>
</evidence>
<name>Y1182_STRP4</name>
<protein>
    <recommendedName>
        <fullName evidence="1">UPF0122 protein SPG_1182</fullName>
    </recommendedName>
</protein>
<gene>
    <name type="ordered locus">SPG_1182</name>
</gene>
<feature type="chain" id="PRO_1000100817" description="UPF0122 protein SPG_1182">
    <location>
        <begin position="1"/>
        <end position="110"/>
    </location>
</feature>
<organism>
    <name type="scientific">Streptococcus pneumoniae serotype 19F (strain G54)</name>
    <dbReference type="NCBI Taxonomy" id="512566"/>
    <lineage>
        <taxon>Bacteria</taxon>
        <taxon>Bacillati</taxon>
        <taxon>Bacillota</taxon>
        <taxon>Bacilli</taxon>
        <taxon>Lactobacillales</taxon>
        <taxon>Streptococcaceae</taxon>
        <taxon>Streptococcus</taxon>
    </lineage>
</organism>
<reference key="1">
    <citation type="journal article" date="2001" name="Microb. Drug Resist.">
        <title>Annotated draft genomic sequence from a Streptococcus pneumoniae type 19F clinical isolate.</title>
        <authorList>
            <person name="Dopazo J."/>
            <person name="Mendoza A."/>
            <person name="Herrero J."/>
            <person name="Caldara F."/>
            <person name="Humbert Y."/>
            <person name="Friedli L."/>
            <person name="Guerrier M."/>
            <person name="Grand-Schenk E."/>
            <person name="Gandin C."/>
            <person name="de Francesco M."/>
            <person name="Polissi A."/>
            <person name="Buell G."/>
            <person name="Feger G."/>
            <person name="Garcia E."/>
            <person name="Peitsch M."/>
            <person name="Garcia-Bustos J.F."/>
        </authorList>
    </citation>
    <scope>NUCLEOTIDE SEQUENCE [LARGE SCALE GENOMIC DNA]</scope>
    <source>
        <strain>G54</strain>
    </source>
</reference>
<reference key="2">
    <citation type="submission" date="2008-03" db="EMBL/GenBank/DDBJ databases">
        <title>Pneumococcal beta glucoside metabolism investigated by whole genome comparison.</title>
        <authorList>
            <person name="Mulas L."/>
            <person name="Trappetti C."/>
            <person name="Hakenbeck R."/>
            <person name="Iannelli F."/>
            <person name="Pozzi G."/>
            <person name="Davidsen T.M."/>
            <person name="Tettelin H."/>
            <person name="Oggioni M."/>
        </authorList>
    </citation>
    <scope>NUCLEOTIDE SEQUENCE [LARGE SCALE GENOMIC DNA]</scope>
    <source>
        <strain>G54</strain>
    </source>
</reference>
<accession>B5E525</accession>
<sequence length="110" mass="13345">MEIEKTNRMNALFEFYAALLTDKQMNYIELYYADDYSLAEIAEEFGVSRQAVYDNIKRTEKILEDYEMKLHMYSDYIVRSQIFDQILERYPKDDFLQEQIEILTSIDXRE</sequence>
<comment type="function">
    <text evidence="1">Might take part in the signal recognition particle (SRP) pathway. This is inferred from the conservation of its genetic proximity to ftsY/ffh. May be a regulatory protein.</text>
</comment>
<comment type="similarity">
    <text evidence="1">Belongs to the UPF0122 family.</text>
</comment>
<dbReference type="EMBL" id="CP001015">
    <property type="protein sequence ID" value="ACF55221.1"/>
    <property type="molecule type" value="Genomic_DNA"/>
</dbReference>
<dbReference type="KEGG" id="spx:SPG_1182"/>
<dbReference type="HOGENOM" id="CLU_129218_1_0_9"/>
<dbReference type="Gene3D" id="1.10.10.10">
    <property type="entry name" value="Winged helix-like DNA-binding domain superfamily/Winged helix DNA-binding domain"/>
    <property type="match status" value="1"/>
</dbReference>
<dbReference type="HAMAP" id="MF_00245">
    <property type="entry name" value="UPF0122"/>
    <property type="match status" value="1"/>
</dbReference>
<dbReference type="InterPro" id="IPR013324">
    <property type="entry name" value="RNA_pol_sigma_r3/r4-like"/>
</dbReference>
<dbReference type="InterPro" id="IPR007394">
    <property type="entry name" value="UPF0122"/>
</dbReference>
<dbReference type="InterPro" id="IPR054831">
    <property type="entry name" value="UPF0122_fam_protein"/>
</dbReference>
<dbReference type="InterPro" id="IPR036388">
    <property type="entry name" value="WH-like_DNA-bd_sf"/>
</dbReference>
<dbReference type="NCBIfam" id="NF001066">
    <property type="entry name" value="PRK00118.1-1"/>
    <property type="match status" value="1"/>
</dbReference>
<dbReference type="NCBIfam" id="NF001068">
    <property type="entry name" value="PRK00118.1-4"/>
    <property type="match status" value="1"/>
</dbReference>
<dbReference type="NCBIfam" id="NF001070">
    <property type="entry name" value="PRK00118.1-6"/>
    <property type="match status" value="1"/>
</dbReference>
<dbReference type="NCBIfam" id="NF045758">
    <property type="entry name" value="YlxM"/>
    <property type="match status" value="1"/>
</dbReference>
<dbReference type="PANTHER" id="PTHR40083">
    <property type="entry name" value="UPF0122 PROTEIN CBO2450/CLC_2298"/>
    <property type="match status" value="1"/>
</dbReference>
<dbReference type="PANTHER" id="PTHR40083:SF1">
    <property type="entry name" value="UPF0122 PROTEIN YLXM"/>
    <property type="match status" value="1"/>
</dbReference>
<dbReference type="Pfam" id="PF04297">
    <property type="entry name" value="UPF0122"/>
    <property type="match status" value="1"/>
</dbReference>
<dbReference type="SUPFAM" id="SSF88659">
    <property type="entry name" value="Sigma3 and sigma4 domains of RNA polymerase sigma factors"/>
    <property type="match status" value="1"/>
</dbReference>
<proteinExistence type="inferred from homology"/>